<protein>
    <recommendedName>
        <fullName evidence="1">Co-chaperonin GroES</fullName>
    </recommendedName>
    <alternativeName>
        <fullName evidence="1">10 kDa chaperonin</fullName>
    </alternativeName>
    <alternativeName>
        <fullName evidence="1">Chaperonin-10</fullName>
        <shortName evidence="1">Cpn10</shortName>
    </alternativeName>
</protein>
<reference key="1">
    <citation type="submission" date="2007-02" db="EMBL/GenBank/DDBJ databases">
        <title>Complete sequence of chromosome of Yersinia pestis Pestoides F.</title>
        <authorList>
            <consortium name="US DOE Joint Genome Institute"/>
            <person name="Copeland A."/>
            <person name="Lucas S."/>
            <person name="Lapidus A."/>
            <person name="Barry K."/>
            <person name="Detter J.C."/>
            <person name="Glavina del Rio T."/>
            <person name="Hammon N."/>
            <person name="Israni S."/>
            <person name="Dalin E."/>
            <person name="Tice H."/>
            <person name="Pitluck S."/>
            <person name="Di Bartolo G."/>
            <person name="Chain P."/>
            <person name="Malfatti S."/>
            <person name="Shin M."/>
            <person name="Vergez L."/>
            <person name="Schmutz J."/>
            <person name="Larimer F."/>
            <person name="Land M."/>
            <person name="Hauser L."/>
            <person name="Worsham P."/>
            <person name="Chu M."/>
            <person name="Bearden S."/>
            <person name="Garcia E."/>
            <person name="Richardson P."/>
        </authorList>
    </citation>
    <scope>NUCLEOTIDE SEQUENCE [LARGE SCALE GENOMIC DNA]</scope>
    <source>
        <strain>Pestoides F</strain>
    </source>
</reference>
<feature type="chain" id="PRO_1000025409" description="Co-chaperonin GroES">
    <location>
        <begin position="1"/>
        <end position="97"/>
    </location>
</feature>
<organism>
    <name type="scientific">Yersinia pestis (strain Pestoides F)</name>
    <dbReference type="NCBI Taxonomy" id="386656"/>
    <lineage>
        <taxon>Bacteria</taxon>
        <taxon>Pseudomonadati</taxon>
        <taxon>Pseudomonadota</taxon>
        <taxon>Gammaproteobacteria</taxon>
        <taxon>Enterobacterales</taxon>
        <taxon>Yersiniaceae</taxon>
        <taxon>Yersinia</taxon>
    </lineage>
</organism>
<keyword id="KW-0143">Chaperone</keyword>
<keyword id="KW-0963">Cytoplasm</keyword>
<name>CH10_YERPP</name>
<evidence type="ECO:0000255" key="1">
    <source>
        <dbReference type="HAMAP-Rule" id="MF_00580"/>
    </source>
</evidence>
<sequence length="97" mass="10357">MKIRPLHDRVIVKRKEVESKSAGGIVLTGTAAGKSTRGEVLAVGNGRILDNGEIKPLDVKVGDVVIFNDGYGVKAEKIDNEEVLIMSESDILAIVEA</sequence>
<comment type="function">
    <text evidence="1">Together with the chaperonin GroEL, plays an essential role in assisting protein folding. The GroEL-GroES system forms a nano-cage that allows encapsulation of the non-native substrate proteins and provides a physical environment optimized to promote and accelerate protein folding. GroES binds to the apical surface of the GroEL ring, thereby capping the opening of the GroEL channel.</text>
</comment>
<comment type="subunit">
    <text evidence="1">Heptamer of 7 subunits arranged in a ring. Interacts with the chaperonin GroEL.</text>
</comment>
<comment type="subcellular location">
    <subcellularLocation>
        <location evidence="1">Cytoplasm</location>
    </subcellularLocation>
</comment>
<comment type="similarity">
    <text evidence="1">Belongs to the GroES chaperonin family.</text>
</comment>
<dbReference type="EMBL" id="CP000668">
    <property type="protein sequence ID" value="ABP41973.1"/>
    <property type="molecule type" value="Genomic_DNA"/>
</dbReference>
<dbReference type="RefSeq" id="WP_002209127.1">
    <property type="nucleotide sequence ID" value="NZ_CP009715.1"/>
</dbReference>
<dbReference type="SMR" id="A4TRR1"/>
<dbReference type="KEGG" id="ypp:YPDSF_3623"/>
<dbReference type="PATRIC" id="fig|386656.14.peg.283"/>
<dbReference type="GO" id="GO:0005737">
    <property type="term" value="C:cytoplasm"/>
    <property type="evidence" value="ECO:0007669"/>
    <property type="project" value="UniProtKB-SubCell"/>
</dbReference>
<dbReference type="GO" id="GO:0005524">
    <property type="term" value="F:ATP binding"/>
    <property type="evidence" value="ECO:0007669"/>
    <property type="project" value="InterPro"/>
</dbReference>
<dbReference type="GO" id="GO:0046872">
    <property type="term" value="F:metal ion binding"/>
    <property type="evidence" value="ECO:0007669"/>
    <property type="project" value="TreeGrafter"/>
</dbReference>
<dbReference type="GO" id="GO:0044183">
    <property type="term" value="F:protein folding chaperone"/>
    <property type="evidence" value="ECO:0007669"/>
    <property type="project" value="InterPro"/>
</dbReference>
<dbReference type="GO" id="GO:0051087">
    <property type="term" value="F:protein-folding chaperone binding"/>
    <property type="evidence" value="ECO:0007669"/>
    <property type="project" value="TreeGrafter"/>
</dbReference>
<dbReference type="GO" id="GO:0051082">
    <property type="term" value="F:unfolded protein binding"/>
    <property type="evidence" value="ECO:0007669"/>
    <property type="project" value="TreeGrafter"/>
</dbReference>
<dbReference type="GO" id="GO:0051085">
    <property type="term" value="P:chaperone cofactor-dependent protein refolding"/>
    <property type="evidence" value="ECO:0007669"/>
    <property type="project" value="TreeGrafter"/>
</dbReference>
<dbReference type="CDD" id="cd00320">
    <property type="entry name" value="cpn10"/>
    <property type="match status" value="1"/>
</dbReference>
<dbReference type="FunFam" id="2.30.33.40:FF:000001">
    <property type="entry name" value="10 kDa chaperonin"/>
    <property type="match status" value="1"/>
</dbReference>
<dbReference type="Gene3D" id="2.30.33.40">
    <property type="entry name" value="GroES chaperonin"/>
    <property type="match status" value="1"/>
</dbReference>
<dbReference type="HAMAP" id="MF_00580">
    <property type="entry name" value="CH10"/>
    <property type="match status" value="1"/>
</dbReference>
<dbReference type="InterPro" id="IPR020818">
    <property type="entry name" value="Chaperonin_GroES"/>
</dbReference>
<dbReference type="InterPro" id="IPR037124">
    <property type="entry name" value="Chaperonin_GroES_sf"/>
</dbReference>
<dbReference type="InterPro" id="IPR018369">
    <property type="entry name" value="Chaprnonin_Cpn10_CS"/>
</dbReference>
<dbReference type="InterPro" id="IPR011032">
    <property type="entry name" value="GroES-like_sf"/>
</dbReference>
<dbReference type="NCBIfam" id="NF001526">
    <property type="entry name" value="PRK00364.1-1"/>
    <property type="match status" value="1"/>
</dbReference>
<dbReference type="NCBIfam" id="NF001527">
    <property type="entry name" value="PRK00364.1-2"/>
    <property type="match status" value="1"/>
</dbReference>
<dbReference type="NCBIfam" id="NF001531">
    <property type="entry name" value="PRK00364.2-2"/>
    <property type="match status" value="1"/>
</dbReference>
<dbReference type="PANTHER" id="PTHR10772">
    <property type="entry name" value="10 KDA HEAT SHOCK PROTEIN"/>
    <property type="match status" value="1"/>
</dbReference>
<dbReference type="PANTHER" id="PTHR10772:SF58">
    <property type="entry name" value="CO-CHAPERONIN GROES"/>
    <property type="match status" value="1"/>
</dbReference>
<dbReference type="Pfam" id="PF00166">
    <property type="entry name" value="Cpn10"/>
    <property type="match status" value="1"/>
</dbReference>
<dbReference type="PRINTS" id="PR00297">
    <property type="entry name" value="CHAPERONIN10"/>
</dbReference>
<dbReference type="SMART" id="SM00883">
    <property type="entry name" value="Cpn10"/>
    <property type="match status" value="1"/>
</dbReference>
<dbReference type="SUPFAM" id="SSF50129">
    <property type="entry name" value="GroES-like"/>
    <property type="match status" value="1"/>
</dbReference>
<dbReference type="PROSITE" id="PS00681">
    <property type="entry name" value="CHAPERONINS_CPN10"/>
    <property type="match status" value="1"/>
</dbReference>
<accession>A4TRR1</accession>
<gene>
    <name evidence="1" type="primary">groES</name>
    <name evidence="1" type="synonym">groS</name>
    <name type="ordered locus">YPDSF_3623</name>
</gene>
<proteinExistence type="inferred from homology"/>